<proteinExistence type="inferred from homology"/>
<protein>
    <recommendedName>
        <fullName evidence="1">Glutamate--tRNA ligase</fullName>
        <ecNumber evidence="1">6.1.1.17</ecNumber>
    </recommendedName>
    <alternativeName>
        <fullName evidence="1">Glutamyl-tRNA synthetase</fullName>
        <shortName evidence="1">GluRS</shortName>
    </alternativeName>
</protein>
<accession>B1HNM5</accession>
<name>SYE_LYSSC</name>
<feature type="chain" id="PRO_1000090086" description="Glutamate--tRNA ligase">
    <location>
        <begin position="1"/>
        <end position="486"/>
    </location>
</feature>
<feature type="short sequence motif" description="'HIGH' region" evidence="1">
    <location>
        <begin position="11"/>
        <end position="21"/>
    </location>
</feature>
<feature type="short sequence motif" description="'KMSKS' region" evidence="1">
    <location>
        <begin position="253"/>
        <end position="257"/>
    </location>
</feature>
<feature type="binding site" evidence="1">
    <location>
        <position position="108"/>
    </location>
    <ligand>
        <name>Zn(2+)</name>
        <dbReference type="ChEBI" id="CHEBI:29105"/>
    </ligand>
</feature>
<feature type="binding site" evidence="1">
    <location>
        <position position="110"/>
    </location>
    <ligand>
        <name>Zn(2+)</name>
        <dbReference type="ChEBI" id="CHEBI:29105"/>
    </ligand>
</feature>
<feature type="binding site" evidence="1">
    <location>
        <position position="136"/>
    </location>
    <ligand>
        <name>Zn(2+)</name>
        <dbReference type="ChEBI" id="CHEBI:29105"/>
    </ligand>
</feature>
<feature type="binding site" evidence="1">
    <location>
        <position position="138"/>
    </location>
    <ligand>
        <name>Zn(2+)</name>
        <dbReference type="ChEBI" id="CHEBI:29105"/>
    </ligand>
</feature>
<feature type="binding site" evidence="1">
    <location>
        <position position="256"/>
    </location>
    <ligand>
        <name>ATP</name>
        <dbReference type="ChEBI" id="CHEBI:30616"/>
    </ligand>
</feature>
<organism>
    <name type="scientific">Lysinibacillus sphaericus (strain C3-41)</name>
    <dbReference type="NCBI Taxonomy" id="444177"/>
    <lineage>
        <taxon>Bacteria</taxon>
        <taxon>Bacillati</taxon>
        <taxon>Bacillota</taxon>
        <taxon>Bacilli</taxon>
        <taxon>Bacillales</taxon>
        <taxon>Bacillaceae</taxon>
        <taxon>Lysinibacillus</taxon>
    </lineage>
</organism>
<sequence>MTKEVRVRYAPSPTGFLHIGGARTALFNYLYAKHHNGKFIVRIEDTDIERNVEGGEASQLDNLKWLGIEYDESIDIGGPYAPYRQMERLDIYKEHAEKLLAQGAAYKCFCSSEKLEASREEQKARGVAAPTYDGTCRHLSAEEVAAKEAAGEPYTIRMRVPENVTYDFEDLVRGQVTFESKDIGDWVIVKANGIPTYNYAVVLDDHFMEISHVFRGEEHLSNTPKQMMIFDAFGWEYPRFGHMTLIINENRKKLSKRDESIIQFVTQYKDLGYLPEAMFNFFALLGWSPEGEEEIFSKEEFIKIFDEKRLSKSPSMFDKQKLTWMNNQYIKKLSLEEVVALSLPHLQKAGLLPDELSAVQHAWATDLIGLYHDQMSFGAEIVELSSLFFKDHIEYDEEAKAVLAGEQVPEVMAAFKAQLEELEEFTPDAVKAAIKAVQKATGHKGKNLFMPIRVVTTGETHGPELPNAICLIGKEKAIDRVEKFAQ</sequence>
<comment type="function">
    <text evidence="1">Catalyzes the attachment of glutamate to tRNA(Glu) in a two-step reaction: glutamate is first activated by ATP to form Glu-AMP and then transferred to the acceptor end of tRNA(Glu).</text>
</comment>
<comment type="catalytic activity">
    <reaction evidence="1">
        <text>tRNA(Glu) + L-glutamate + ATP = L-glutamyl-tRNA(Glu) + AMP + diphosphate</text>
        <dbReference type="Rhea" id="RHEA:23540"/>
        <dbReference type="Rhea" id="RHEA-COMP:9663"/>
        <dbReference type="Rhea" id="RHEA-COMP:9680"/>
        <dbReference type="ChEBI" id="CHEBI:29985"/>
        <dbReference type="ChEBI" id="CHEBI:30616"/>
        <dbReference type="ChEBI" id="CHEBI:33019"/>
        <dbReference type="ChEBI" id="CHEBI:78442"/>
        <dbReference type="ChEBI" id="CHEBI:78520"/>
        <dbReference type="ChEBI" id="CHEBI:456215"/>
        <dbReference type="EC" id="6.1.1.17"/>
    </reaction>
</comment>
<comment type="cofactor">
    <cofactor evidence="1">
        <name>Zn(2+)</name>
        <dbReference type="ChEBI" id="CHEBI:29105"/>
    </cofactor>
    <text evidence="1">Binds 1 zinc ion per subunit.</text>
</comment>
<comment type="subunit">
    <text evidence="1">Monomer.</text>
</comment>
<comment type="subcellular location">
    <subcellularLocation>
        <location evidence="1">Cytoplasm</location>
    </subcellularLocation>
</comment>
<comment type="similarity">
    <text evidence="1">Belongs to the class-I aminoacyl-tRNA synthetase family. Glutamate--tRNA ligase type 1 subfamily.</text>
</comment>
<reference key="1">
    <citation type="journal article" date="2008" name="J. Bacteriol.">
        <title>Complete genome sequence of the mosquitocidal bacterium Bacillus sphaericus C3-41 and comparison with those of closely related Bacillus species.</title>
        <authorList>
            <person name="Hu X."/>
            <person name="Fan W."/>
            <person name="Han B."/>
            <person name="Liu H."/>
            <person name="Zheng D."/>
            <person name="Li Q."/>
            <person name="Dong W."/>
            <person name="Yan J."/>
            <person name="Gao M."/>
            <person name="Berry C."/>
            <person name="Yuan Z."/>
        </authorList>
    </citation>
    <scope>NUCLEOTIDE SEQUENCE [LARGE SCALE GENOMIC DNA]</scope>
    <source>
        <strain>C3-41</strain>
    </source>
</reference>
<keyword id="KW-0030">Aminoacyl-tRNA synthetase</keyword>
<keyword id="KW-0067">ATP-binding</keyword>
<keyword id="KW-0963">Cytoplasm</keyword>
<keyword id="KW-0436">Ligase</keyword>
<keyword id="KW-0479">Metal-binding</keyword>
<keyword id="KW-0547">Nucleotide-binding</keyword>
<keyword id="KW-0648">Protein biosynthesis</keyword>
<keyword id="KW-0862">Zinc</keyword>
<evidence type="ECO:0000255" key="1">
    <source>
        <dbReference type="HAMAP-Rule" id="MF_00022"/>
    </source>
</evidence>
<dbReference type="EC" id="6.1.1.17" evidence="1"/>
<dbReference type="EMBL" id="CP000817">
    <property type="protein sequence ID" value="ACA42088.1"/>
    <property type="molecule type" value="Genomic_DNA"/>
</dbReference>
<dbReference type="RefSeq" id="WP_012296090.1">
    <property type="nucleotide sequence ID" value="NC_010382.1"/>
</dbReference>
<dbReference type="SMR" id="B1HNM5"/>
<dbReference type="EnsemblBacteria" id="ACA42088">
    <property type="protein sequence ID" value="ACA42088"/>
    <property type="gene ID" value="Bsph_4644"/>
</dbReference>
<dbReference type="KEGG" id="lsp:Bsph_4644"/>
<dbReference type="HOGENOM" id="CLU_015768_6_1_9"/>
<dbReference type="Proteomes" id="UP000002164">
    <property type="component" value="Chromosome"/>
</dbReference>
<dbReference type="GO" id="GO:0005829">
    <property type="term" value="C:cytosol"/>
    <property type="evidence" value="ECO:0007669"/>
    <property type="project" value="TreeGrafter"/>
</dbReference>
<dbReference type="GO" id="GO:0005524">
    <property type="term" value="F:ATP binding"/>
    <property type="evidence" value="ECO:0007669"/>
    <property type="project" value="UniProtKB-UniRule"/>
</dbReference>
<dbReference type="GO" id="GO:0004818">
    <property type="term" value="F:glutamate-tRNA ligase activity"/>
    <property type="evidence" value="ECO:0007669"/>
    <property type="project" value="UniProtKB-UniRule"/>
</dbReference>
<dbReference type="GO" id="GO:0000049">
    <property type="term" value="F:tRNA binding"/>
    <property type="evidence" value="ECO:0007669"/>
    <property type="project" value="InterPro"/>
</dbReference>
<dbReference type="GO" id="GO:0008270">
    <property type="term" value="F:zinc ion binding"/>
    <property type="evidence" value="ECO:0007669"/>
    <property type="project" value="UniProtKB-UniRule"/>
</dbReference>
<dbReference type="GO" id="GO:0006424">
    <property type="term" value="P:glutamyl-tRNA aminoacylation"/>
    <property type="evidence" value="ECO:0007669"/>
    <property type="project" value="UniProtKB-UniRule"/>
</dbReference>
<dbReference type="CDD" id="cd00808">
    <property type="entry name" value="GluRS_core"/>
    <property type="match status" value="1"/>
</dbReference>
<dbReference type="FunFam" id="1.10.10.350:FF:000002">
    <property type="entry name" value="Glutamate--tRNA ligase"/>
    <property type="match status" value="1"/>
</dbReference>
<dbReference type="FunFam" id="3.40.50.620:FF:000007">
    <property type="entry name" value="Glutamate--tRNA ligase"/>
    <property type="match status" value="1"/>
</dbReference>
<dbReference type="Gene3D" id="1.10.10.350">
    <property type="match status" value="1"/>
</dbReference>
<dbReference type="Gene3D" id="3.40.50.620">
    <property type="entry name" value="HUPs"/>
    <property type="match status" value="1"/>
</dbReference>
<dbReference type="HAMAP" id="MF_00022">
    <property type="entry name" value="Glu_tRNA_synth_type1"/>
    <property type="match status" value="1"/>
</dbReference>
<dbReference type="InterPro" id="IPR045462">
    <property type="entry name" value="aa-tRNA-synth_I_cd-bd"/>
</dbReference>
<dbReference type="InterPro" id="IPR020751">
    <property type="entry name" value="aa-tRNA-synth_I_codon-bd_sub2"/>
</dbReference>
<dbReference type="InterPro" id="IPR001412">
    <property type="entry name" value="aa-tRNA-synth_I_CS"/>
</dbReference>
<dbReference type="InterPro" id="IPR008925">
    <property type="entry name" value="aa_tRNA-synth_I_cd-bd_sf"/>
</dbReference>
<dbReference type="InterPro" id="IPR004527">
    <property type="entry name" value="Glu-tRNA-ligase_bac/mito"/>
</dbReference>
<dbReference type="InterPro" id="IPR000924">
    <property type="entry name" value="Glu/Gln-tRNA-synth"/>
</dbReference>
<dbReference type="InterPro" id="IPR020058">
    <property type="entry name" value="Glu/Gln-tRNA-synth_Ib_cat-dom"/>
</dbReference>
<dbReference type="InterPro" id="IPR049940">
    <property type="entry name" value="GluQ/Sye"/>
</dbReference>
<dbReference type="InterPro" id="IPR033910">
    <property type="entry name" value="GluRS_core"/>
</dbReference>
<dbReference type="InterPro" id="IPR014729">
    <property type="entry name" value="Rossmann-like_a/b/a_fold"/>
</dbReference>
<dbReference type="NCBIfam" id="TIGR00464">
    <property type="entry name" value="gltX_bact"/>
    <property type="match status" value="1"/>
</dbReference>
<dbReference type="PANTHER" id="PTHR43311">
    <property type="entry name" value="GLUTAMATE--TRNA LIGASE"/>
    <property type="match status" value="1"/>
</dbReference>
<dbReference type="PANTHER" id="PTHR43311:SF2">
    <property type="entry name" value="GLUTAMATE--TRNA LIGASE, MITOCHONDRIAL-RELATED"/>
    <property type="match status" value="1"/>
</dbReference>
<dbReference type="Pfam" id="PF19269">
    <property type="entry name" value="Anticodon_2"/>
    <property type="match status" value="1"/>
</dbReference>
<dbReference type="Pfam" id="PF00749">
    <property type="entry name" value="tRNA-synt_1c"/>
    <property type="match status" value="1"/>
</dbReference>
<dbReference type="PRINTS" id="PR00987">
    <property type="entry name" value="TRNASYNTHGLU"/>
</dbReference>
<dbReference type="SUPFAM" id="SSF48163">
    <property type="entry name" value="An anticodon-binding domain of class I aminoacyl-tRNA synthetases"/>
    <property type="match status" value="1"/>
</dbReference>
<dbReference type="SUPFAM" id="SSF52374">
    <property type="entry name" value="Nucleotidylyl transferase"/>
    <property type="match status" value="1"/>
</dbReference>
<dbReference type="PROSITE" id="PS00178">
    <property type="entry name" value="AA_TRNA_LIGASE_I"/>
    <property type="match status" value="1"/>
</dbReference>
<gene>
    <name evidence="1" type="primary">gltX</name>
    <name type="ordered locus">Bsph_4644</name>
</gene>